<sequence>MENDMETATMTQDYHIANINLADWGRKEIEIAETEMPGLMALRKKYKNAKPLKGARIAGCIHMTIQTAVLIETLMLLGAEVRWSSCNIFSTQDHAAAALAQKGIPIFAWKGETEEEYWRCIASTLEGPKGWTPNLLLDDGGDLTAHTLQKHPELCQNIRGVSEETTTGVHRLYRMLKEGSLKFPAINVNDSVTKSKFDNLYGCRESLIDSIKRATDVMIAGKRVVVCGYGDVGKGCAQSLRAYGATVYITEIDPICALQAAMEGYRVVTMDEMADSADIFVTATGNTDIITHEHMLKMKDQAIVCNIGHFDNEIDIASLQDYQWMNIKPQVDQVIFPDGKRLMVLAQGRLVNLGCATGHPSFVMSNSFTNQVLAQIELWQYPEKYPIGVYVLPKHLDEEVARLHLERVGAKLTTLTEKQADYIGVDPEGPFKSEHYRY</sequence>
<reference key="1">
    <citation type="journal article" date="2009" name="Infect. Immun.">
        <title>Comparative genomics reveal extensive transposon-mediated genomic plasticity and diversity among potential effector proteins within the genus Coxiella.</title>
        <authorList>
            <person name="Beare P.A."/>
            <person name="Unsworth N."/>
            <person name="Andoh M."/>
            <person name="Voth D.E."/>
            <person name="Omsland A."/>
            <person name="Gilk S.D."/>
            <person name="Williams K.P."/>
            <person name="Sobral B.W."/>
            <person name="Kupko J.J. III"/>
            <person name="Porcella S.F."/>
            <person name="Samuel J.E."/>
            <person name="Heinzen R.A."/>
        </authorList>
    </citation>
    <scope>NUCLEOTIDE SEQUENCE [LARGE SCALE GENOMIC DNA]</scope>
    <source>
        <strain>CbuK_Q154</strain>
    </source>
</reference>
<organism>
    <name type="scientific">Coxiella burnetii (strain CbuK_Q154)</name>
    <name type="common">Coxiella burnetii (strain Q154)</name>
    <dbReference type="NCBI Taxonomy" id="434924"/>
    <lineage>
        <taxon>Bacteria</taxon>
        <taxon>Pseudomonadati</taxon>
        <taxon>Pseudomonadota</taxon>
        <taxon>Gammaproteobacteria</taxon>
        <taxon>Legionellales</taxon>
        <taxon>Coxiellaceae</taxon>
        <taxon>Coxiella</taxon>
    </lineage>
</organism>
<gene>
    <name evidence="1" type="primary">ahcY</name>
    <name type="ordered locus">CbuK_2083</name>
</gene>
<feature type="chain" id="PRO_1000129277" description="Adenosylhomocysteinase">
    <location>
        <begin position="1"/>
        <end position="438"/>
    </location>
</feature>
<feature type="binding site" evidence="1">
    <location>
        <position position="64"/>
    </location>
    <ligand>
        <name>substrate</name>
    </ligand>
</feature>
<feature type="binding site" evidence="1">
    <location>
        <position position="139"/>
    </location>
    <ligand>
        <name>substrate</name>
    </ligand>
</feature>
<feature type="binding site" evidence="1">
    <location>
        <position position="164"/>
    </location>
    <ligand>
        <name>substrate</name>
    </ligand>
</feature>
<feature type="binding site" evidence="1">
    <location>
        <begin position="165"/>
        <end position="167"/>
    </location>
    <ligand>
        <name>NAD(+)</name>
        <dbReference type="ChEBI" id="CHEBI:57540"/>
    </ligand>
</feature>
<feature type="binding site" evidence="1">
    <location>
        <position position="194"/>
    </location>
    <ligand>
        <name>substrate</name>
    </ligand>
</feature>
<feature type="binding site" evidence="1">
    <location>
        <position position="198"/>
    </location>
    <ligand>
        <name>substrate</name>
    </ligand>
</feature>
<feature type="binding site" evidence="1">
    <location>
        <position position="199"/>
    </location>
    <ligand>
        <name>NAD(+)</name>
        <dbReference type="ChEBI" id="CHEBI:57540"/>
    </ligand>
</feature>
<feature type="binding site" evidence="1">
    <location>
        <begin position="228"/>
        <end position="233"/>
    </location>
    <ligand>
        <name>NAD(+)</name>
        <dbReference type="ChEBI" id="CHEBI:57540"/>
    </ligand>
</feature>
<feature type="binding site" evidence="1">
    <location>
        <position position="251"/>
    </location>
    <ligand>
        <name>NAD(+)</name>
        <dbReference type="ChEBI" id="CHEBI:57540"/>
    </ligand>
</feature>
<feature type="binding site" evidence="1">
    <location>
        <position position="286"/>
    </location>
    <ligand>
        <name>NAD(+)</name>
        <dbReference type="ChEBI" id="CHEBI:57540"/>
    </ligand>
</feature>
<feature type="binding site" evidence="1">
    <location>
        <begin position="307"/>
        <end position="309"/>
    </location>
    <ligand>
        <name>NAD(+)</name>
        <dbReference type="ChEBI" id="CHEBI:57540"/>
    </ligand>
</feature>
<feature type="binding site" evidence="1">
    <location>
        <position position="352"/>
    </location>
    <ligand>
        <name>NAD(+)</name>
        <dbReference type="ChEBI" id="CHEBI:57540"/>
    </ligand>
</feature>
<comment type="function">
    <text evidence="1">May play a key role in the regulation of the intracellular concentration of adenosylhomocysteine.</text>
</comment>
<comment type="catalytic activity">
    <reaction evidence="1">
        <text>S-adenosyl-L-homocysteine + H2O = L-homocysteine + adenosine</text>
        <dbReference type="Rhea" id="RHEA:21708"/>
        <dbReference type="ChEBI" id="CHEBI:15377"/>
        <dbReference type="ChEBI" id="CHEBI:16335"/>
        <dbReference type="ChEBI" id="CHEBI:57856"/>
        <dbReference type="ChEBI" id="CHEBI:58199"/>
        <dbReference type="EC" id="3.13.2.1"/>
    </reaction>
</comment>
<comment type="cofactor">
    <cofactor evidence="1">
        <name>NAD(+)</name>
        <dbReference type="ChEBI" id="CHEBI:57540"/>
    </cofactor>
    <text evidence="1">Binds 1 NAD(+) per subunit.</text>
</comment>
<comment type="pathway">
    <text evidence="1">Amino-acid biosynthesis; L-homocysteine biosynthesis; L-homocysteine from S-adenosyl-L-homocysteine: step 1/1.</text>
</comment>
<comment type="subcellular location">
    <subcellularLocation>
        <location evidence="1">Cytoplasm</location>
    </subcellularLocation>
</comment>
<comment type="similarity">
    <text evidence="1">Belongs to the adenosylhomocysteinase family.</text>
</comment>
<accession>B6J6H1</accession>
<evidence type="ECO:0000255" key="1">
    <source>
        <dbReference type="HAMAP-Rule" id="MF_00563"/>
    </source>
</evidence>
<proteinExistence type="inferred from homology"/>
<dbReference type="EC" id="3.13.2.1" evidence="1"/>
<dbReference type="EMBL" id="CP001020">
    <property type="protein sequence ID" value="ACJ21181.1"/>
    <property type="molecule type" value="Genomic_DNA"/>
</dbReference>
<dbReference type="RefSeq" id="WP_012570946.1">
    <property type="nucleotide sequence ID" value="NC_011528.1"/>
</dbReference>
<dbReference type="SMR" id="B6J6H1"/>
<dbReference type="KEGG" id="cbc:CbuK_2083"/>
<dbReference type="HOGENOM" id="CLU_025194_2_1_6"/>
<dbReference type="UniPathway" id="UPA00314">
    <property type="reaction ID" value="UER00076"/>
</dbReference>
<dbReference type="GO" id="GO:0005829">
    <property type="term" value="C:cytosol"/>
    <property type="evidence" value="ECO:0007669"/>
    <property type="project" value="TreeGrafter"/>
</dbReference>
<dbReference type="GO" id="GO:0004013">
    <property type="term" value="F:adenosylhomocysteinase activity"/>
    <property type="evidence" value="ECO:0007669"/>
    <property type="project" value="UniProtKB-UniRule"/>
</dbReference>
<dbReference type="GO" id="GO:0071269">
    <property type="term" value="P:L-homocysteine biosynthetic process"/>
    <property type="evidence" value="ECO:0007669"/>
    <property type="project" value="UniProtKB-UniRule"/>
</dbReference>
<dbReference type="GO" id="GO:0006730">
    <property type="term" value="P:one-carbon metabolic process"/>
    <property type="evidence" value="ECO:0007669"/>
    <property type="project" value="UniProtKB-KW"/>
</dbReference>
<dbReference type="GO" id="GO:0033353">
    <property type="term" value="P:S-adenosylmethionine cycle"/>
    <property type="evidence" value="ECO:0007669"/>
    <property type="project" value="TreeGrafter"/>
</dbReference>
<dbReference type="CDD" id="cd00401">
    <property type="entry name" value="SAHH"/>
    <property type="match status" value="1"/>
</dbReference>
<dbReference type="FunFam" id="3.40.50.1480:FF:000006">
    <property type="entry name" value="Adenosylhomocysteinase"/>
    <property type="match status" value="1"/>
</dbReference>
<dbReference type="FunFam" id="3.40.50.720:FF:000004">
    <property type="entry name" value="Adenosylhomocysteinase"/>
    <property type="match status" value="1"/>
</dbReference>
<dbReference type="Gene3D" id="3.40.50.1480">
    <property type="entry name" value="Adenosylhomocysteinase-like"/>
    <property type="match status" value="3"/>
</dbReference>
<dbReference type="Gene3D" id="3.40.50.720">
    <property type="entry name" value="NAD(P)-binding Rossmann-like Domain"/>
    <property type="match status" value="1"/>
</dbReference>
<dbReference type="HAMAP" id="MF_00563">
    <property type="entry name" value="AdoHcyase"/>
    <property type="match status" value="1"/>
</dbReference>
<dbReference type="InterPro" id="IPR042172">
    <property type="entry name" value="Adenosylhomocyst_ase-like_sf"/>
</dbReference>
<dbReference type="InterPro" id="IPR000043">
    <property type="entry name" value="Adenosylhomocysteinase-like"/>
</dbReference>
<dbReference type="InterPro" id="IPR015878">
    <property type="entry name" value="Ado_hCys_hydrolase_NAD-bd"/>
</dbReference>
<dbReference type="InterPro" id="IPR036291">
    <property type="entry name" value="NAD(P)-bd_dom_sf"/>
</dbReference>
<dbReference type="InterPro" id="IPR020082">
    <property type="entry name" value="S-Ado-L-homoCys_hydrolase_CS"/>
</dbReference>
<dbReference type="NCBIfam" id="TIGR00936">
    <property type="entry name" value="ahcY"/>
    <property type="match status" value="1"/>
</dbReference>
<dbReference type="NCBIfam" id="NF004005">
    <property type="entry name" value="PRK05476.2-3"/>
    <property type="match status" value="1"/>
</dbReference>
<dbReference type="PANTHER" id="PTHR23420">
    <property type="entry name" value="ADENOSYLHOMOCYSTEINASE"/>
    <property type="match status" value="1"/>
</dbReference>
<dbReference type="PANTHER" id="PTHR23420:SF0">
    <property type="entry name" value="ADENOSYLHOMOCYSTEINASE"/>
    <property type="match status" value="1"/>
</dbReference>
<dbReference type="Pfam" id="PF05221">
    <property type="entry name" value="AdoHcyase"/>
    <property type="match status" value="2"/>
</dbReference>
<dbReference type="Pfam" id="PF00670">
    <property type="entry name" value="AdoHcyase_NAD"/>
    <property type="match status" value="1"/>
</dbReference>
<dbReference type="PIRSF" id="PIRSF001109">
    <property type="entry name" value="Ad_hcy_hydrolase"/>
    <property type="match status" value="1"/>
</dbReference>
<dbReference type="SMART" id="SM00996">
    <property type="entry name" value="AdoHcyase"/>
    <property type="match status" value="1"/>
</dbReference>
<dbReference type="SMART" id="SM00997">
    <property type="entry name" value="AdoHcyase_NAD"/>
    <property type="match status" value="1"/>
</dbReference>
<dbReference type="SUPFAM" id="SSF52283">
    <property type="entry name" value="Formate/glycerate dehydrogenase catalytic domain-like"/>
    <property type="match status" value="1"/>
</dbReference>
<dbReference type="SUPFAM" id="SSF51735">
    <property type="entry name" value="NAD(P)-binding Rossmann-fold domains"/>
    <property type="match status" value="1"/>
</dbReference>
<dbReference type="PROSITE" id="PS00738">
    <property type="entry name" value="ADOHCYASE_1"/>
    <property type="match status" value="1"/>
</dbReference>
<dbReference type="PROSITE" id="PS00739">
    <property type="entry name" value="ADOHCYASE_2"/>
    <property type="match status" value="1"/>
</dbReference>
<protein>
    <recommendedName>
        <fullName evidence="1">Adenosylhomocysteinase</fullName>
        <ecNumber evidence="1">3.13.2.1</ecNumber>
    </recommendedName>
    <alternativeName>
        <fullName evidence="1">S-adenosyl-L-homocysteine hydrolase</fullName>
        <shortName evidence="1">AdoHcyase</shortName>
    </alternativeName>
</protein>
<name>SAHH_COXB1</name>
<keyword id="KW-0963">Cytoplasm</keyword>
<keyword id="KW-0378">Hydrolase</keyword>
<keyword id="KW-0520">NAD</keyword>
<keyword id="KW-0554">One-carbon metabolism</keyword>